<keyword id="KW-0227">DNA damage</keyword>
<keyword id="KW-0234">DNA repair</keyword>
<keyword id="KW-0235">DNA replication</keyword>
<keyword id="KW-0436">Ligase</keyword>
<keyword id="KW-0460">Magnesium</keyword>
<keyword id="KW-0464">Manganese</keyword>
<keyword id="KW-0479">Metal-binding</keyword>
<keyword id="KW-0520">NAD</keyword>
<keyword id="KW-1185">Reference proteome</keyword>
<keyword id="KW-0862">Zinc</keyword>
<organism>
    <name type="scientific">Desulfatibacillum aliphaticivorans</name>
    <dbReference type="NCBI Taxonomy" id="218208"/>
    <lineage>
        <taxon>Bacteria</taxon>
        <taxon>Pseudomonadati</taxon>
        <taxon>Thermodesulfobacteriota</taxon>
        <taxon>Desulfobacteria</taxon>
        <taxon>Desulfobacterales</taxon>
        <taxon>Desulfatibacillaceae</taxon>
        <taxon>Desulfatibacillum</taxon>
    </lineage>
</organism>
<feature type="chain" id="PRO_0000380360" description="DNA ligase">
    <location>
        <begin position="1"/>
        <end position="631"/>
    </location>
</feature>
<feature type="domain" description="BRCT" evidence="1">
    <location>
        <begin position="539"/>
        <end position="630"/>
    </location>
</feature>
<feature type="active site" description="N6-AMP-lysine intermediate" evidence="1">
    <location>
        <position position="115"/>
    </location>
</feature>
<feature type="binding site" evidence="1">
    <location>
        <begin position="37"/>
        <end position="41"/>
    </location>
    <ligand>
        <name>NAD(+)</name>
        <dbReference type="ChEBI" id="CHEBI:57540"/>
    </ligand>
</feature>
<feature type="binding site" evidence="1">
    <location>
        <begin position="79"/>
        <end position="80"/>
    </location>
    <ligand>
        <name>NAD(+)</name>
        <dbReference type="ChEBI" id="CHEBI:57540"/>
    </ligand>
</feature>
<feature type="binding site" evidence="1">
    <location>
        <position position="131"/>
    </location>
    <ligand>
        <name>NAD(+)</name>
        <dbReference type="ChEBI" id="CHEBI:57540"/>
    </ligand>
</feature>
<feature type="binding site" evidence="1">
    <location>
        <position position="160"/>
    </location>
    <ligand>
        <name>NAD(+)</name>
        <dbReference type="ChEBI" id="CHEBI:57540"/>
    </ligand>
</feature>
<feature type="binding site" evidence="1">
    <location>
        <position position="272"/>
    </location>
    <ligand>
        <name>NAD(+)</name>
        <dbReference type="ChEBI" id="CHEBI:57540"/>
    </ligand>
</feature>
<feature type="binding site" evidence="1">
    <location>
        <position position="361"/>
    </location>
    <ligand>
        <name>Zn(2+)</name>
        <dbReference type="ChEBI" id="CHEBI:29105"/>
    </ligand>
</feature>
<feature type="binding site" evidence="1">
    <location>
        <position position="364"/>
    </location>
    <ligand>
        <name>Zn(2+)</name>
        <dbReference type="ChEBI" id="CHEBI:29105"/>
    </ligand>
</feature>
<feature type="binding site" evidence="1">
    <location>
        <position position="377"/>
    </location>
    <ligand>
        <name>Zn(2+)</name>
        <dbReference type="ChEBI" id="CHEBI:29105"/>
    </ligand>
</feature>
<feature type="binding site" evidence="1">
    <location>
        <position position="382"/>
    </location>
    <ligand>
        <name>Zn(2+)</name>
        <dbReference type="ChEBI" id="CHEBI:29105"/>
    </ligand>
</feature>
<gene>
    <name evidence="1" type="primary">ligA</name>
    <name type="ordered locus">Dalk_0040</name>
</gene>
<proteinExistence type="inferred from homology"/>
<comment type="function">
    <text evidence="1">DNA ligase that catalyzes the formation of phosphodiester linkages between 5'-phosphoryl and 3'-hydroxyl groups in double-stranded DNA using NAD as a coenzyme and as the energy source for the reaction. It is essential for DNA replication and repair of damaged DNA.</text>
</comment>
<comment type="catalytic activity">
    <reaction evidence="1">
        <text>NAD(+) + (deoxyribonucleotide)n-3'-hydroxyl + 5'-phospho-(deoxyribonucleotide)m = (deoxyribonucleotide)n+m + AMP + beta-nicotinamide D-nucleotide.</text>
        <dbReference type="EC" id="6.5.1.2"/>
    </reaction>
</comment>
<comment type="cofactor">
    <cofactor evidence="1">
        <name>Mg(2+)</name>
        <dbReference type="ChEBI" id="CHEBI:18420"/>
    </cofactor>
    <cofactor evidence="1">
        <name>Mn(2+)</name>
        <dbReference type="ChEBI" id="CHEBI:29035"/>
    </cofactor>
</comment>
<comment type="similarity">
    <text evidence="1">Belongs to the NAD-dependent DNA ligase family. LigA subfamily.</text>
</comment>
<accession>B8FKD5</accession>
<evidence type="ECO:0000255" key="1">
    <source>
        <dbReference type="HAMAP-Rule" id="MF_01588"/>
    </source>
</evidence>
<protein>
    <recommendedName>
        <fullName evidence="1">DNA ligase</fullName>
        <ecNumber evidence="1">6.5.1.2</ecNumber>
    </recommendedName>
    <alternativeName>
        <fullName evidence="1">Polydeoxyribonucleotide synthase [NAD(+)]</fullName>
    </alternativeName>
</protein>
<reference key="1">
    <citation type="journal article" date="2012" name="Environ. Microbiol.">
        <title>The genome sequence of Desulfatibacillum alkenivorans AK-01: a blueprint for anaerobic alkane oxidation.</title>
        <authorList>
            <person name="Callaghan A.V."/>
            <person name="Morris B.E."/>
            <person name="Pereira I.A."/>
            <person name="McInerney M.J."/>
            <person name="Austin R.N."/>
            <person name="Groves J.T."/>
            <person name="Kukor J.J."/>
            <person name="Suflita J.M."/>
            <person name="Young L.Y."/>
            <person name="Zylstra G.J."/>
            <person name="Wawrik B."/>
        </authorList>
    </citation>
    <scope>NUCLEOTIDE SEQUENCE [LARGE SCALE GENOMIC DNA]</scope>
    <source>
        <strain>AK-01</strain>
    </source>
</reference>
<name>DNLJ_DESAL</name>
<dbReference type="EC" id="6.5.1.2" evidence="1"/>
<dbReference type="EMBL" id="CP001322">
    <property type="protein sequence ID" value="ACL01750.1"/>
    <property type="molecule type" value="Genomic_DNA"/>
</dbReference>
<dbReference type="RefSeq" id="WP_012609190.1">
    <property type="nucleotide sequence ID" value="NC_011768.1"/>
</dbReference>
<dbReference type="SMR" id="B8FKD5"/>
<dbReference type="KEGG" id="dal:Dalk_0040"/>
<dbReference type="eggNOG" id="COG0272">
    <property type="taxonomic scope" value="Bacteria"/>
</dbReference>
<dbReference type="HOGENOM" id="CLU_007764_2_0_7"/>
<dbReference type="Proteomes" id="UP000000739">
    <property type="component" value="Chromosome"/>
</dbReference>
<dbReference type="GO" id="GO:0003911">
    <property type="term" value="F:DNA ligase (NAD+) activity"/>
    <property type="evidence" value="ECO:0007669"/>
    <property type="project" value="UniProtKB-UniRule"/>
</dbReference>
<dbReference type="GO" id="GO:0046872">
    <property type="term" value="F:metal ion binding"/>
    <property type="evidence" value="ECO:0007669"/>
    <property type="project" value="UniProtKB-KW"/>
</dbReference>
<dbReference type="GO" id="GO:0006281">
    <property type="term" value="P:DNA repair"/>
    <property type="evidence" value="ECO:0007669"/>
    <property type="project" value="UniProtKB-KW"/>
</dbReference>
<dbReference type="GO" id="GO:0006260">
    <property type="term" value="P:DNA replication"/>
    <property type="evidence" value="ECO:0007669"/>
    <property type="project" value="UniProtKB-KW"/>
</dbReference>
<dbReference type="CDD" id="cd17748">
    <property type="entry name" value="BRCT_DNA_ligase_like"/>
    <property type="match status" value="1"/>
</dbReference>
<dbReference type="Gene3D" id="1.10.150.20">
    <property type="entry name" value="5' to 3' exonuclease, C-terminal subdomain"/>
    <property type="match status" value="1"/>
</dbReference>
<dbReference type="Gene3D" id="3.40.50.10190">
    <property type="entry name" value="BRCT domain"/>
    <property type="match status" value="1"/>
</dbReference>
<dbReference type="Gene3D" id="3.30.470.30">
    <property type="entry name" value="DNA ligase/mRNA capping enzyme"/>
    <property type="match status" value="1"/>
</dbReference>
<dbReference type="Gene3D" id="2.40.50.140">
    <property type="entry name" value="Nucleic acid-binding proteins"/>
    <property type="match status" value="1"/>
</dbReference>
<dbReference type="HAMAP" id="MF_01588">
    <property type="entry name" value="DNA_ligase_A"/>
    <property type="match status" value="1"/>
</dbReference>
<dbReference type="InterPro" id="IPR001357">
    <property type="entry name" value="BRCT_dom"/>
</dbReference>
<dbReference type="InterPro" id="IPR036420">
    <property type="entry name" value="BRCT_dom_sf"/>
</dbReference>
<dbReference type="InterPro" id="IPR001679">
    <property type="entry name" value="DNA_ligase"/>
</dbReference>
<dbReference type="InterPro" id="IPR013839">
    <property type="entry name" value="DNAligase_adenylation"/>
</dbReference>
<dbReference type="InterPro" id="IPR013840">
    <property type="entry name" value="DNAligase_N"/>
</dbReference>
<dbReference type="InterPro" id="IPR012340">
    <property type="entry name" value="NA-bd_OB-fold"/>
</dbReference>
<dbReference type="InterPro" id="IPR004150">
    <property type="entry name" value="NAD_DNA_ligase_OB"/>
</dbReference>
<dbReference type="InterPro" id="IPR010994">
    <property type="entry name" value="RuvA_2-like"/>
</dbReference>
<dbReference type="Pfam" id="PF00533">
    <property type="entry name" value="BRCT"/>
    <property type="match status" value="1"/>
</dbReference>
<dbReference type="Pfam" id="PF01653">
    <property type="entry name" value="DNA_ligase_aden"/>
    <property type="match status" value="1"/>
</dbReference>
<dbReference type="Pfam" id="PF03120">
    <property type="entry name" value="DNA_ligase_OB"/>
    <property type="match status" value="1"/>
</dbReference>
<dbReference type="PIRSF" id="PIRSF001604">
    <property type="entry name" value="LigA"/>
    <property type="match status" value="1"/>
</dbReference>
<dbReference type="SMART" id="SM00292">
    <property type="entry name" value="BRCT"/>
    <property type="match status" value="1"/>
</dbReference>
<dbReference type="SMART" id="SM00532">
    <property type="entry name" value="LIGANc"/>
    <property type="match status" value="1"/>
</dbReference>
<dbReference type="SUPFAM" id="SSF52113">
    <property type="entry name" value="BRCT domain"/>
    <property type="match status" value="1"/>
</dbReference>
<dbReference type="SUPFAM" id="SSF56091">
    <property type="entry name" value="DNA ligase/mRNA capping enzyme, catalytic domain"/>
    <property type="match status" value="1"/>
</dbReference>
<dbReference type="SUPFAM" id="SSF50249">
    <property type="entry name" value="Nucleic acid-binding proteins"/>
    <property type="match status" value="1"/>
</dbReference>
<dbReference type="SUPFAM" id="SSF47781">
    <property type="entry name" value="RuvA domain 2-like"/>
    <property type="match status" value="1"/>
</dbReference>
<dbReference type="PROSITE" id="PS50172">
    <property type="entry name" value="BRCT"/>
    <property type="match status" value="1"/>
</dbReference>
<sequence>MQDLPSSIADISDPELLGQWLEKYNEAYRAGKPMISDAHYDLLVERLREIAPDHGFLSAVEAETFADKREVRHPAPMLSTEKAYDKQSLERFVERVYKEAAQIGVTDVLFQVTPKLDGLAARDDGQILATRGNGYAGYDITNALEKGVIPQGGRGLGLGEIVAVQSYFQENLADRFEHPRNMVVGIISSDVLNISAKQALEDKQVHFVPYATLNKWEGSGKELLENSEKITQDLIQATDYPMDGMVASVMNQDVRDHMGATSHHYRWQIAIKAKGETGVTTVNAITWQVGRTGNVTPVLEVEPLKLSGATIRRVTAHNAGRIREKGAGVGASIEVIRSGEVIPKLENVLTPSDDTLIPENCPVCETPLEWNNDFLKCPNLNCKARVEQRIRHWFRILGNADWFGIKTVERLVAGGFDSLEKIYAMTEEDFLSLEFGPVQSKNLAEAINLSKSRPVEDWRFLAAFGISDLGEGDSRKILSFFPLEELLDKTRDDIVALHGFGDVTSISIEKGLKALGPTIRHMLDLGFNLQPTPLKSEMDVSSPISGKGVVFTGSMETGSRKDMEENARSLGANVQKAVTGKTDYLICGAKVGAKKTQKAQDLGVTVLTEQEYLQLVEGGESQSSPEQMSLF</sequence>